<proteinExistence type="inferred from homology"/>
<sequence length="82" mass="9382">MSDKIRTLQGRVTSNKMDKSITVAIERQVKHPIYGKYIKRTTKIHAHDETNQCNEGDLVAIRECRPLSKTKSWTLVEVVSKA</sequence>
<dbReference type="EMBL" id="CP000681">
    <property type="protein sequence ID" value="ABP77457.1"/>
    <property type="molecule type" value="Genomic_DNA"/>
</dbReference>
<dbReference type="SMR" id="A4YBX4"/>
<dbReference type="STRING" id="319224.Sputcn32_3750"/>
<dbReference type="KEGG" id="spc:Sputcn32_3750"/>
<dbReference type="eggNOG" id="COG0186">
    <property type="taxonomic scope" value="Bacteria"/>
</dbReference>
<dbReference type="HOGENOM" id="CLU_073626_1_1_6"/>
<dbReference type="GO" id="GO:0022627">
    <property type="term" value="C:cytosolic small ribosomal subunit"/>
    <property type="evidence" value="ECO:0007669"/>
    <property type="project" value="TreeGrafter"/>
</dbReference>
<dbReference type="GO" id="GO:0019843">
    <property type="term" value="F:rRNA binding"/>
    <property type="evidence" value="ECO:0007669"/>
    <property type="project" value="UniProtKB-UniRule"/>
</dbReference>
<dbReference type="GO" id="GO:0003735">
    <property type="term" value="F:structural constituent of ribosome"/>
    <property type="evidence" value="ECO:0007669"/>
    <property type="project" value="InterPro"/>
</dbReference>
<dbReference type="GO" id="GO:0006412">
    <property type="term" value="P:translation"/>
    <property type="evidence" value="ECO:0007669"/>
    <property type="project" value="UniProtKB-UniRule"/>
</dbReference>
<dbReference type="CDD" id="cd00364">
    <property type="entry name" value="Ribosomal_uS17"/>
    <property type="match status" value="1"/>
</dbReference>
<dbReference type="FunFam" id="2.40.50.140:FF:000014">
    <property type="entry name" value="30S ribosomal protein S17"/>
    <property type="match status" value="1"/>
</dbReference>
<dbReference type="Gene3D" id="2.40.50.140">
    <property type="entry name" value="Nucleic acid-binding proteins"/>
    <property type="match status" value="1"/>
</dbReference>
<dbReference type="HAMAP" id="MF_01345_B">
    <property type="entry name" value="Ribosomal_uS17_B"/>
    <property type="match status" value="1"/>
</dbReference>
<dbReference type="InterPro" id="IPR012340">
    <property type="entry name" value="NA-bd_OB-fold"/>
</dbReference>
<dbReference type="InterPro" id="IPR000266">
    <property type="entry name" value="Ribosomal_uS17"/>
</dbReference>
<dbReference type="InterPro" id="IPR019984">
    <property type="entry name" value="Ribosomal_uS17_bact/chlr"/>
</dbReference>
<dbReference type="InterPro" id="IPR019979">
    <property type="entry name" value="Ribosomal_uS17_CS"/>
</dbReference>
<dbReference type="NCBIfam" id="NF004123">
    <property type="entry name" value="PRK05610.1"/>
    <property type="match status" value="1"/>
</dbReference>
<dbReference type="NCBIfam" id="TIGR03635">
    <property type="entry name" value="uS17_bact"/>
    <property type="match status" value="1"/>
</dbReference>
<dbReference type="PANTHER" id="PTHR10744">
    <property type="entry name" value="40S RIBOSOMAL PROTEIN S11 FAMILY MEMBER"/>
    <property type="match status" value="1"/>
</dbReference>
<dbReference type="PANTHER" id="PTHR10744:SF1">
    <property type="entry name" value="SMALL RIBOSOMAL SUBUNIT PROTEIN US17M"/>
    <property type="match status" value="1"/>
</dbReference>
<dbReference type="Pfam" id="PF00366">
    <property type="entry name" value="Ribosomal_S17"/>
    <property type="match status" value="1"/>
</dbReference>
<dbReference type="PRINTS" id="PR00973">
    <property type="entry name" value="RIBOSOMALS17"/>
</dbReference>
<dbReference type="SUPFAM" id="SSF50249">
    <property type="entry name" value="Nucleic acid-binding proteins"/>
    <property type="match status" value="1"/>
</dbReference>
<dbReference type="PROSITE" id="PS00056">
    <property type="entry name" value="RIBOSOMAL_S17"/>
    <property type="match status" value="1"/>
</dbReference>
<comment type="function">
    <text evidence="1">One of the primary rRNA binding proteins, it binds specifically to the 5'-end of 16S ribosomal RNA.</text>
</comment>
<comment type="subunit">
    <text evidence="1">Part of the 30S ribosomal subunit.</text>
</comment>
<comment type="similarity">
    <text evidence="1">Belongs to the universal ribosomal protein uS17 family.</text>
</comment>
<organism>
    <name type="scientific">Shewanella putrefaciens (strain CN-32 / ATCC BAA-453)</name>
    <dbReference type="NCBI Taxonomy" id="319224"/>
    <lineage>
        <taxon>Bacteria</taxon>
        <taxon>Pseudomonadati</taxon>
        <taxon>Pseudomonadota</taxon>
        <taxon>Gammaproteobacteria</taxon>
        <taxon>Alteromonadales</taxon>
        <taxon>Shewanellaceae</taxon>
        <taxon>Shewanella</taxon>
    </lineage>
</organism>
<protein>
    <recommendedName>
        <fullName evidence="1">Small ribosomal subunit protein uS17</fullName>
    </recommendedName>
    <alternativeName>
        <fullName evidence="2">30S ribosomal protein S17</fullName>
    </alternativeName>
</protein>
<name>RS17_SHEPC</name>
<keyword id="KW-0687">Ribonucleoprotein</keyword>
<keyword id="KW-0689">Ribosomal protein</keyword>
<keyword id="KW-0694">RNA-binding</keyword>
<keyword id="KW-0699">rRNA-binding</keyword>
<reference key="1">
    <citation type="submission" date="2007-04" db="EMBL/GenBank/DDBJ databases">
        <title>Complete sequence of Shewanella putrefaciens CN-32.</title>
        <authorList>
            <consortium name="US DOE Joint Genome Institute"/>
            <person name="Copeland A."/>
            <person name="Lucas S."/>
            <person name="Lapidus A."/>
            <person name="Barry K."/>
            <person name="Detter J.C."/>
            <person name="Glavina del Rio T."/>
            <person name="Hammon N."/>
            <person name="Israni S."/>
            <person name="Dalin E."/>
            <person name="Tice H."/>
            <person name="Pitluck S."/>
            <person name="Chain P."/>
            <person name="Malfatti S."/>
            <person name="Shin M."/>
            <person name="Vergez L."/>
            <person name="Schmutz J."/>
            <person name="Larimer F."/>
            <person name="Land M."/>
            <person name="Hauser L."/>
            <person name="Kyrpides N."/>
            <person name="Mikhailova N."/>
            <person name="Romine M.F."/>
            <person name="Fredrickson J."/>
            <person name="Tiedje J."/>
            <person name="Richardson P."/>
        </authorList>
    </citation>
    <scope>NUCLEOTIDE SEQUENCE [LARGE SCALE GENOMIC DNA]</scope>
    <source>
        <strain>CN-32 / ATCC BAA-453</strain>
    </source>
</reference>
<gene>
    <name evidence="1" type="primary">rpsQ</name>
    <name type="ordered locus">Sputcn32_3750</name>
</gene>
<feature type="chain" id="PRO_1000055021" description="Small ribosomal subunit protein uS17">
    <location>
        <begin position="1"/>
        <end position="82"/>
    </location>
</feature>
<accession>A4YBX4</accession>
<evidence type="ECO:0000255" key="1">
    <source>
        <dbReference type="HAMAP-Rule" id="MF_01345"/>
    </source>
</evidence>
<evidence type="ECO:0000305" key="2"/>